<dbReference type="EC" id="3.5.4.13" evidence="1"/>
<dbReference type="EMBL" id="CP000909">
    <property type="protein sequence ID" value="ABY34222.1"/>
    <property type="molecule type" value="Genomic_DNA"/>
</dbReference>
<dbReference type="RefSeq" id="WP_012256878.1">
    <property type="nucleotide sequence ID" value="NC_010175.1"/>
</dbReference>
<dbReference type="RefSeq" id="YP_001634611.1">
    <property type="nucleotide sequence ID" value="NC_010175.1"/>
</dbReference>
<dbReference type="SMR" id="A9WHV4"/>
<dbReference type="STRING" id="324602.Caur_0990"/>
<dbReference type="EnsemblBacteria" id="ABY34222">
    <property type="protein sequence ID" value="ABY34222"/>
    <property type="gene ID" value="Caur_0990"/>
</dbReference>
<dbReference type="KEGG" id="cau:Caur_0990"/>
<dbReference type="PATRIC" id="fig|324602.8.peg.1129"/>
<dbReference type="eggNOG" id="COG0717">
    <property type="taxonomic scope" value="Bacteria"/>
</dbReference>
<dbReference type="HOGENOM" id="CLU_087476_4_0_0"/>
<dbReference type="InParanoid" id="A9WHV4"/>
<dbReference type="UniPathway" id="UPA00610">
    <property type="reaction ID" value="UER00665"/>
</dbReference>
<dbReference type="Proteomes" id="UP000002008">
    <property type="component" value="Chromosome"/>
</dbReference>
<dbReference type="GO" id="GO:0008829">
    <property type="term" value="F:dCTP deaminase activity"/>
    <property type="evidence" value="ECO:0000318"/>
    <property type="project" value="GO_Central"/>
</dbReference>
<dbReference type="GO" id="GO:0000166">
    <property type="term" value="F:nucleotide binding"/>
    <property type="evidence" value="ECO:0007669"/>
    <property type="project" value="UniProtKB-KW"/>
</dbReference>
<dbReference type="GO" id="GO:0006226">
    <property type="term" value="P:dUMP biosynthetic process"/>
    <property type="evidence" value="ECO:0007669"/>
    <property type="project" value="UniProtKB-UniPathway"/>
</dbReference>
<dbReference type="GO" id="GO:0006229">
    <property type="term" value="P:dUTP biosynthetic process"/>
    <property type="evidence" value="ECO:0007669"/>
    <property type="project" value="UniProtKB-UniRule"/>
</dbReference>
<dbReference type="GO" id="GO:0015949">
    <property type="term" value="P:nucleobase-containing small molecule interconversion"/>
    <property type="evidence" value="ECO:0000318"/>
    <property type="project" value="GO_Central"/>
</dbReference>
<dbReference type="CDD" id="cd07557">
    <property type="entry name" value="trimeric_dUTPase"/>
    <property type="match status" value="1"/>
</dbReference>
<dbReference type="FunFam" id="2.70.40.10:FF:000001">
    <property type="entry name" value="dCTP deaminase"/>
    <property type="match status" value="1"/>
</dbReference>
<dbReference type="Gene3D" id="2.70.40.10">
    <property type="match status" value="1"/>
</dbReference>
<dbReference type="HAMAP" id="MF_00146">
    <property type="entry name" value="dCTP_deaminase"/>
    <property type="match status" value="1"/>
</dbReference>
<dbReference type="InterPro" id="IPR011962">
    <property type="entry name" value="dCTP_deaminase"/>
</dbReference>
<dbReference type="InterPro" id="IPR036157">
    <property type="entry name" value="dUTPase-like_sf"/>
</dbReference>
<dbReference type="InterPro" id="IPR033704">
    <property type="entry name" value="dUTPase_trimeric"/>
</dbReference>
<dbReference type="NCBIfam" id="TIGR02274">
    <property type="entry name" value="dCTP_deam"/>
    <property type="match status" value="1"/>
</dbReference>
<dbReference type="PANTHER" id="PTHR42680">
    <property type="entry name" value="DCTP DEAMINASE"/>
    <property type="match status" value="1"/>
</dbReference>
<dbReference type="PANTHER" id="PTHR42680:SF3">
    <property type="entry name" value="DCTP DEAMINASE"/>
    <property type="match status" value="1"/>
</dbReference>
<dbReference type="Pfam" id="PF22769">
    <property type="entry name" value="DCD"/>
    <property type="match status" value="1"/>
</dbReference>
<dbReference type="SUPFAM" id="SSF51283">
    <property type="entry name" value="dUTPase-like"/>
    <property type="match status" value="1"/>
</dbReference>
<organism>
    <name type="scientific">Chloroflexus aurantiacus (strain ATCC 29366 / DSM 635 / J-10-fl)</name>
    <dbReference type="NCBI Taxonomy" id="324602"/>
    <lineage>
        <taxon>Bacteria</taxon>
        <taxon>Bacillati</taxon>
        <taxon>Chloroflexota</taxon>
        <taxon>Chloroflexia</taxon>
        <taxon>Chloroflexales</taxon>
        <taxon>Chloroflexineae</taxon>
        <taxon>Chloroflexaceae</taxon>
        <taxon>Chloroflexus</taxon>
    </lineage>
</organism>
<accession>A9WHV4</accession>
<feature type="chain" id="PRO_1000076614" description="dCTP deaminase">
    <location>
        <begin position="1"/>
        <end position="186"/>
    </location>
</feature>
<feature type="active site" description="Proton donor/acceptor" evidence="1">
    <location>
        <position position="133"/>
    </location>
</feature>
<feature type="binding site" evidence="1">
    <location>
        <begin position="107"/>
        <end position="112"/>
    </location>
    <ligand>
        <name>dCTP</name>
        <dbReference type="ChEBI" id="CHEBI:61481"/>
    </ligand>
</feature>
<feature type="binding site" evidence="1">
    <location>
        <position position="152"/>
    </location>
    <ligand>
        <name>dCTP</name>
        <dbReference type="ChEBI" id="CHEBI:61481"/>
    </ligand>
</feature>
<feature type="binding site" evidence="1">
    <location>
        <position position="166"/>
    </location>
    <ligand>
        <name>dCTP</name>
        <dbReference type="ChEBI" id="CHEBI:61481"/>
    </ligand>
</feature>
<feature type="binding site" evidence="1">
    <location>
        <position position="176"/>
    </location>
    <ligand>
        <name>dCTP</name>
        <dbReference type="ChEBI" id="CHEBI:61481"/>
    </ligand>
</feature>
<name>DCD_CHLAA</name>
<evidence type="ECO:0000255" key="1">
    <source>
        <dbReference type="HAMAP-Rule" id="MF_00146"/>
    </source>
</evidence>
<gene>
    <name evidence="1" type="primary">dcd</name>
    <name type="ordered locus">Caur_0990</name>
</gene>
<sequence length="186" mass="21181">MPIKSDRWIRRMALEHGMIEPFVDHQVRRGVISYGLTSYGYDMRVTDHFKVFTNVYNALVDPKQFDPRSFVDIRADYVDIPPNSFALAQSLEYFRIPRTVSCIVIGKSSYARCGIIINVTPLEPEWEGHVTIEISNTTPLPARIYAHEGIGQVLFLESDEPCEVSYADKKGKYQGQTGIVLPRIDP</sequence>
<keyword id="KW-0378">Hydrolase</keyword>
<keyword id="KW-0546">Nucleotide metabolism</keyword>
<keyword id="KW-0547">Nucleotide-binding</keyword>
<keyword id="KW-1185">Reference proteome</keyword>
<reference key="1">
    <citation type="journal article" date="2011" name="BMC Genomics">
        <title>Complete genome sequence of the filamentous anoxygenic phototrophic bacterium Chloroflexus aurantiacus.</title>
        <authorList>
            <person name="Tang K.H."/>
            <person name="Barry K."/>
            <person name="Chertkov O."/>
            <person name="Dalin E."/>
            <person name="Han C.S."/>
            <person name="Hauser L.J."/>
            <person name="Honchak B.M."/>
            <person name="Karbach L.E."/>
            <person name="Land M.L."/>
            <person name="Lapidus A."/>
            <person name="Larimer F.W."/>
            <person name="Mikhailova N."/>
            <person name="Pitluck S."/>
            <person name="Pierson B.K."/>
            <person name="Blankenship R.E."/>
        </authorList>
    </citation>
    <scope>NUCLEOTIDE SEQUENCE [LARGE SCALE GENOMIC DNA]</scope>
    <source>
        <strain>ATCC 29366 / DSM 635 / J-10-fl</strain>
    </source>
</reference>
<comment type="function">
    <text evidence="1">Catalyzes the deamination of dCTP to dUTP.</text>
</comment>
<comment type="catalytic activity">
    <reaction evidence="1">
        <text>dCTP + H2O + H(+) = dUTP + NH4(+)</text>
        <dbReference type="Rhea" id="RHEA:22680"/>
        <dbReference type="ChEBI" id="CHEBI:15377"/>
        <dbReference type="ChEBI" id="CHEBI:15378"/>
        <dbReference type="ChEBI" id="CHEBI:28938"/>
        <dbReference type="ChEBI" id="CHEBI:61481"/>
        <dbReference type="ChEBI" id="CHEBI:61555"/>
        <dbReference type="EC" id="3.5.4.13"/>
    </reaction>
</comment>
<comment type="pathway">
    <text evidence="1">Pyrimidine metabolism; dUMP biosynthesis; dUMP from dCTP (dUTP route): step 1/2.</text>
</comment>
<comment type="subunit">
    <text evidence="1">Homotrimer.</text>
</comment>
<comment type="similarity">
    <text evidence="1">Belongs to the dCTP deaminase family.</text>
</comment>
<protein>
    <recommendedName>
        <fullName evidence="1">dCTP deaminase</fullName>
        <ecNumber evidence="1">3.5.4.13</ecNumber>
    </recommendedName>
    <alternativeName>
        <fullName evidence="1">Deoxycytidine triphosphate deaminase</fullName>
    </alternativeName>
</protein>
<proteinExistence type="inferred from homology"/>